<keyword id="KW-0903">Direct protein sequencing</keyword>
<keyword id="KW-0249">Electron transport</keyword>
<keyword id="KW-0349">Heme</keyword>
<keyword id="KW-0408">Iron</keyword>
<keyword id="KW-0479">Metal-binding</keyword>
<keyword id="KW-0574">Periplasm</keyword>
<keyword id="KW-0732">Signal</keyword>
<keyword id="KW-0813">Transport</keyword>
<reference key="1">
    <citation type="journal article" date="1995" name="Biochim. Biophys. Acta">
        <title>Cloning, sequencing, and mutagenesis of the cytochrome c4 gene from Azotobacter vinelandii: characterization of the mutant strain and a proposed new branch in the respiratory chain.</title>
        <authorList>
            <person name="Ng T.C.N."/>
            <person name="Laheri A.N."/>
            <person name="Maier R.J."/>
        </authorList>
    </citation>
    <scope>NUCLEOTIDE SEQUENCE [GENOMIC DNA]</scope>
    <source>
        <strain>CA</strain>
    </source>
</reference>
<reference key="2">
    <citation type="journal article" date="1984" name="Biochem. J.">
        <title>The amino acid sequence of the dihaem cytochrome c4 from the bacterium Azotobacter vinelandii.</title>
        <authorList>
            <person name="Ambler R.P."/>
            <person name="Daniel M."/>
            <person name="Melis K."/>
            <person name="Stout C.D."/>
        </authorList>
    </citation>
    <scope>PROTEIN SEQUENCE OF 21-210</scope>
    <source>
        <strain>ATCC 13705 / OP1 / DSM 366 / NCIMB 11614 / LMG 3878 / UW</strain>
    </source>
</reference>
<dbReference type="EMBL" id="L37290">
    <property type="protein sequence ID" value="AAA87314.1"/>
    <property type="molecule type" value="Genomic_DNA"/>
</dbReference>
<dbReference type="PIR" id="I39740">
    <property type="entry name" value="I39740"/>
</dbReference>
<dbReference type="RefSeq" id="WP_012698889.1">
    <property type="nucleotide sequence ID" value="NZ_FPKM01000002.1"/>
</dbReference>
<dbReference type="SMR" id="P43302"/>
<dbReference type="OMA" id="RGVPACM"/>
<dbReference type="GO" id="GO:0042597">
    <property type="term" value="C:periplasmic space"/>
    <property type="evidence" value="ECO:0007669"/>
    <property type="project" value="UniProtKB-SubCell"/>
</dbReference>
<dbReference type="GO" id="GO:0009055">
    <property type="term" value="F:electron transfer activity"/>
    <property type="evidence" value="ECO:0007669"/>
    <property type="project" value="InterPro"/>
</dbReference>
<dbReference type="GO" id="GO:0020037">
    <property type="term" value="F:heme binding"/>
    <property type="evidence" value="ECO:0007669"/>
    <property type="project" value="InterPro"/>
</dbReference>
<dbReference type="GO" id="GO:0005506">
    <property type="term" value="F:iron ion binding"/>
    <property type="evidence" value="ECO:0007669"/>
    <property type="project" value="InterPro"/>
</dbReference>
<dbReference type="FunFam" id="1.10.760.10:FF:000016">
    <property type="entry name" value="Cytochrome c4"/>
    <property type="match status" value="1"/>
</dbReference>
<dbReference type="Gene3D" id="1.10.760.10">
    <property type="entry name" value="Cytochrome c-like domain"/>
    <property type="match status" value="2"/>
</dbReference>
<dbReference type="InterPro" id="IPR009056">
    <property type="entry name" value="Cyt_c-like_dom"/>
</dbReference>
<dbReference type="InterPro" id="IPR036909">
    <property type="entry name" value="Cyt_c-like_dom_sf"/>
</dbReference>
<dbReference type="InterPro" id="IPR024167">
    <property type="entry name" value="Cytochrome_c4-like"/>
</dbReference>
<dbReference type="InterPro" id="IPR050597">
    <property type="entry name" value="Cytochrome_c_Oxidase_Subunit"/>
</dbReference>
<dbReference type="PANTHER" id="PTHR33751">
    <property type="entry name" value="CBB3-TYPE CYTOCHROME C OXIDASE SUBUNIT FIXP"/>
    <property type="match status" value="1"/>
</dbReference>
<dbReference type="PANTHER" id="PTHR33751:SF9">
    <property type="entry name" value="CYTOCHROME C4"/>
    <property type="match status" value="1"/>
</dbReference>
<dbReference type="Pfam" id="PF00034">
    <property type="entry name" value="Cytochrom_C"/>
    <property type="match status" value="2"/>
</dbReference>
<dbReference type="PIRSF" id="PIRSF000005">
    <property type="entry name" value="Cytochrome_c4"/>
    <property type="match status" value="1"/>
</dbReference>
<dbReference type="SUPFAM" id="SSF46626">
    <property type="entry name" value="Cytochrome c"/>
    <property type="match status" value="2"/>
</dbReference>
<dbReference type="PROSITE" id="PS51007">
    <property type="entry name" value="CYTC"/>
    <property type="match status" value="2"/>
</dbReference>
<protein>
    <recommendedName>
        <fullName>Cytochrome c4</fullName>
    </recommendedName>
</protein>
<comment type="function">
    <text>Diheme, high potential cytochrome c believed to be an intermediate electron donor to terminal oxidation systems.</text>
</comment>
<comment type="subcellular location">
    <subcellularLocation>
        <location>Periplasm</location>
    </subcellularLocation>
</comment>
<comment type="PTM">
    <text>Binds 2 heme c groups covalently per subunit.</text>
</comment>
<proteinExistence type="evidence at protein level"/>
<accession>P43302</accession>
<feature type="signal peptide" evidence="1">
    <location>
        <begin position="1"/>
        <end position="20"/>
    </location>
</feature>
<feature type="chain" id="PRO_0000006507" description="Cytochrome c4">
    <location>
        <begin position="21"/>
        <end position="210"/>
    </location>
</feature>
<feature type="binding site" description="covalent">
    <location>
        <position position="34"/>
    </location>
    <ligand>
        <name>heme c</name>
        <dbReference type="ChEBI" id="CHEBI:61717"/>
        <label>1</label>
    </ligand>
</feature>
<feature type="binding site" description="covalent">
    <location>
        <position position="37"/>
    </location>
    <ligand>
        <name>heme c</name>
        <dbReference type="ChEBI" id="CHEBI:61717"/>
        <label>1</label>
    </ligand>
</feature>
<feature type="binding site" description="axial binding residue">
    <location>
        <position position="38"/>
    </location>
    <ligand>
        <name>heme c</name>
        <dbReference type="ChEBI" id="CHEBI:61717"/>
        <label>1</label>
    </ligand>
    <ligandPart>
        <name>Fe</name>
        <dbReference type="ChEBI" id="CHEBI:18248"/>
    </ligandPart>
</feature>
<feature type="binding site" description="axial binding residue">
    <location>
        <position position="86"/>
    </location>
    <ligand>
        <name>heme c</name>
        <dbReference type="ChEBI" id="CHEBI:61717"/>
        <label>1</label>
    </ligand>
    <ligandPart>
        <name>Fe</name>
        <dbReference type="ChEBI" id="CHEBI:18248"/>
    </ligandPart>
</feature>
<feature type="binding site" description="covalent">
    <location>
        <position position="139"/>
    </location>
    <ligand>
        <name>heme c</name>
        <dbReference type="ChEBI" id="CHEBI:61717"/>
        <label>2</label>
    </ligand>
</feature>
<feature type="binding site" description="covalent">
    <location>
        <position position="142"/>
    </location>
    <ligand>
        <name>heme c</name>
        <dbReference type="ChEBI" id="CHEBI:61717"/>
        <label>2</label>
    </ligand>
</feature>
<feature type="binding site" description="axial binding residue">
    <location>
        <position position="143"/>
    </location>
    <ligand>
        <name>heme c</name>
        <dbReference type="ChEBI" id="CHEBI:61717"/>
        <label>2</label>
    </ligand>
    <ligandPart>
        <name>Fe</name>
        <dbReference type="ChEBI" id="CHEBI:18248"/>
    </ligandPart>
</feature>
<feature type="binding site" description="axial binding residue">
    <location>
        <position position="187"/>
    </location>
    <ligand>
        <name>heme c</name>
        <dbReference type="ChEBI" id="CHEBI:61717"/>
        <label>2</label>
    </ligand>
    <ligandPart>
        <name>Fe</name>
        <dbReference type="ChEBI" id="CHEBI:18248"/>
    </ligandPart>
</feature>
<sequence>MNKALVTLLLTLGITGLAHAAGDAAAGQGKAAVCGACHGPDGNSAAPNFPKLAGQGERYLLKQMQDIKAGTKPGAPEGSGRKVLEMTGMLDNFSDQDLADLAAYFTSQKPTVGAADPQLVEAGETLYRGGKLADGMPACTGCHSPNGEGNTPAAYPRLSGQHAQYVAKQLTDFREGARTNDGDNMIMRSIAAKLSNKDIAAISSYIQGLH</sequence>
<gene>
    <name type="primary">cycA</name>
</gene>
<name>CYC4_AZOVI</name>
<evidence type="ECO:0000269" key="1">
    <source>
    </source>
</evidence>
<organism>
    <name type="scientific">Azotobacter vinelandii</name>
    <dbReference type="NCBI Taxonomy" id="354"/>
    <lineage>
        <taxon>Bacteria</taxon>
        <taxon>Pseudomonadati</taxon>
        <taxon>Pseudomonadota</taxon>
        <taxon>Gammaproteobacteria</taxon>
        <taxon>Pseudomonadales</taxon>
        <taxon>Pseudomonadaceae</taxon>
        <taxon>Azotobacter</taxon>
    </lineage>
</organism>